<reference key="1">
    <citation type="submission" date="2007-04" db="EMBL/GenBank/DDBJ databases">
        <title>Complete sequence of Pseudomonas mendocina ymp.</title>
        <authorList>
            <consortium name="US DOE Joint Genome Institute"/>
            <person name="Copeland A."/>
            <person name="Lucas S."/>
            <person name="Lapidus A."/>
            <person name="Barry K."/>
            <person name="Glavina del Rio T."/>
            <person name="Dalin E."/>
            <person name="Tice H."/>
            <person name="Pitluck S."/>
            <person name="Kiss H."/>
            <person name="Brettin T."/>
            <person name="Detter J.C."/>
            <person name="Bruce D."/>
            <person name="Han C."/>
            <person name="Schmutz J."/>
            <person name="Larimer F."/>
            <person name="Land M."/>
            <person name="Hauser L."/>
            <person name="Kyrpides N."/>
            <person name="Mikhailova N."/>
            <person name="Hersman L."/>
            <person name="Dubois J."/>
            <person name="Maurice P."/>
            <person name="Richardson P."/>
        </authorList>
    </citation>
    <scope>NUCLEOTIDE SEQUENCE [LARGE SCALE GENOMIC DNA]</scope>
    <source>
        <strain>ymp</strain>
    </source>
</reference>
<gene>
    <name evidence="1" type="primary">kdsB</name>
    <name type="ordered locus">Pmen_1616</name>
</gene>
<organism>
    <name type="scientific">Ectopseudomonas mendocina (strain ymp)</name>
    <name type="common">Pseudomonas mendocina</name>
    <dbReference type="NCBI Taxonomy" id="399739"/>
    <lineage>
        <taxon>Bacteria</taxon>
        <taxon>Pseudomonadati</taxon>
        <taxon>Pseudomonadota</taxon>
        <taxon>Gammaproteobacteria</taxon>
        <taxon>Pseudomonadales</taxon>
        <taxon>Pseudomonadaceae</taxon>
        <taxon>Ectopseudomonas</taxon>
    </lineage>
</organism>
<proteinExistence type="inferred from homology"/>
<accession>A4XSR4</accession>
<protein>
    <recommendedName>
        <fullName evidence="1">3-deoxy-manno-octulosonate cytidylyltransferase</fullName>
        <ecNumber evidence="1">2.7.7.38</ecNumber>
    </recommendedName>
    <alternativeName>
        <fullName evidence="1">CMP-2-keto-3-deoxyoctulosonic acid synthase</fullName>
        <shortName evidence="1">CKS</shortName>
        <shortName evidence="1">CMP-KDO synthase</shortName>
    </alternativeName>
</protein>
<evidence type="ECO:0000255" key="1">
    <source>
        <dbReference type="HAMAP-Rule" id="MF_00057"/>
    </source>
</evidence>
<feature type="chain" id="PRO_1000091892" description="3-deoxy-manno-octulosonate cytidylyltransferase">
    <location>
        <begin position="1"/>
        <end position="254"/>
    </location>
</feature>
<keyword id="KW-0963">Cytoplasm</keyword>
<keyword id="KW-0448">Lipopolysaccharide biosynthesis</keyword>
<keyword id="KW-0548">Nucleotidyltransferase</keyword>
<keyword id="KW-0808">Transferase</keyword>
<name>KDSB_ECTM1</name>
<sequence length="254" mass="27279">MSAAFTVVIPARYASTRLPGKPLQDIAGKPMVQHVWEQAKKSSASRVVVATDDARIVEACKVFGAEVLLTREDHNSGTDRLAEVATQLGLPADAIVVNVQGDEPLVPPSIIDQVAANLATNPQAGIATLAEPIEDVTALFNPNVVKVVADKSGLALTFSRAPLAWARDAFAKSRDVLPAGVPYRRHIGIYAYRAGFLHDFVAWGPCWLEDTECLEQLRALYNGVRIHVADALEAPAAGVDTAEDLERVRRLLGA</sequence>
<comment type="function">
    <text evidence="1">Activates KDO (a required 8-carbon sugar) for incorporation into bacterial lipopolysaccharide in Gram-negative bacteria.</text>
</comment>
<comment type="catalytic activity">
    <reaction evidence="1">
        <text>3-deoxy-alpha-D-manno-oct-2-ulosonate + CTP = CMP-3-deoxy-beta-D-manno-octulosonate + diphosphate</text>
        <dbReference type="Rhea" id="RHEA:23448"/>
        <dbReference type="ChEBI" id="CHEBI:33019"/>
        <dbReference type="ChEBI" id="CHEBI:37563"/>
        <dbReference type="ChEBI" id="CHEBI:85986"/>
        <dbReference type="ChEBI" id="CHEBI:85987"/>
        <dbReference type="EC" id="2.7.7.38"/>
    </reaction>
</comment>
<comment type="pathway">
    <text evidence="1">Nucleotide-sugar biosynthesis; CMP-3-deoxy-D-manno-octulosonate biosynthesis; CMP-3-deoxy-D-manno-octulosonate from 3-deoxy-D-manno-octulosonate and CTP: step 1/1.</text>
</comment>
<comment type="pathway">
    <text evidence="1">Bacterial outer membrane biogenesis; lipopolysaccharide biosynthesis.</text>
</comment>
<comment type="subcellular location">
    <subcellularLocation>
        <location evidence="1">Cytoplasm</location>
    </subcellularLocation>
</comment>
<comment type="similarity">
    <text evidence="1">Belongs to the KdsB family.</text>
</comment>
<dbReference type="EC" id="2.7.7.38" evidence="1"/>
<dbReference type="EMBL" id="CP000680">
    <property type="protein sequence ID" value="ABP84380.1"/>
    <property type="molecule type" value="Genomic_DNA"/>
</dbReference>
<dbReference type="SMR" id="A4XSR4"/>
<dbReference type="STRING" id="399739.Pmen_1616"/>
<dbReference type="KEGG" id="pmy:Pmen_1616"/>
<dbReference type="PATRIC" id="fig|399739.8.peg.1638"/>
<dbReference type="eggNOG" id="COG1212">
    <property type="taxonomic scope" value="Bacteria"/>
</dbReference>
<dbReference type="HOGENOM" id="CLU_065038_1_0_6"/>
<dbReference type="OrthoDB" id="9815559at2"/>
<dbReference type="UniPathway" id="UPA00030"/>
<dbReference type="UniPathway" id="UPA00358">
    <property type="reaction ID" value="UER00476"/>
</dbReference>
<dbReference type="GO" id="GO:0005829">
    <property type="term" value="C:cytosol"/>
    <property type="evidence" value="ECO:0007669"/>
    <property type="project" value="TreeGrafter"/>
</dbReference>
<dbReference type="GO" id="GO:0008690">
    <property type="term" value="F:3-deoxy-manno-octulosonate cytidylyltransferase activity"/>
    <property type="evidence" value="ECO:0007669"/>
    <property type="project" value="UniProtKB-UniRule"/>
</dbReference>
<dbReference type="GO" id="GO:0033468">
    <property type="term" value="P:CMP-keto-3-deoxy-D-manno-octulosonic acid biosynthetic process"/>
    <property type="evidence" value="ECO:0007669"/>
    <property type="project" value="UniProtKB-UniRule"/>
</dbReference>
<dbReference type="GO" id="GO:0009103">
    <property type="term" value="P:lipopolysaccharide biosynthetic process"/>
    <property type="evidence" value="ECO:0007669"/>
    <property type="project" value="UniProtKB-UniRule"/>
</dbReference>
<dbReference type="CDD" id="cd02517">
    <property type="entry name" value="CMP-KDO-Synthetase"/>
    <property type="match status" value="1"/>
</dbReference>
<dbReference type="FunFam" id="3.90.550.10:FF:000011">
    <property type="entry name" value="3-deoxy-manno-octulosonate cytidylyltransferase"/>
    <property type="match status" value="1"/>
</dbReference>
<dbReference type="Gene3D" id="3.90.550.10">
    <property type="entry name" value="Spore Coat Polysaccharide Biosynthesis Protein SpsA, Chain A"/>
    <property type="match status" value="1"/>
</dbReference>
<dbReference type="HAMAP" id="MF_00057">
    <property type="entry name" value="KdsB"/>
    <property type="match status" value="1"/>
</dbReference>
<dbReference type="InterPro" id="IPR003329">
    <property type="entry name" value="Cytidylyl_trans"/>
</dbReference>
<dbReference type="InterPro" id="IPR004528">
    <property type="entry name" value="KdsB"/>
</dbReference>
<dbReference type="InterPro" id="IPR029044">
    <property type="entry name" value="Nucleotide-diphossugar_trans"/>
</dbReference>
<dbReference type="NCBIfam" id="TIGR00466">
    <property type="entry name" value="kdsB"/>
    <property type="match status" value="1"/>
</dbReference>
<dbReference type="NCBIfam" id="NF003950">
    <property type="entry name" value="PRK05450.1-3"/>
    <property type="match status" value="1"/>
</dbReference>
<dbReference type="NCBIfam" id="NF003952">
    <property type="entry name" value="PRK05450.1-5"/>
    <property type="match status" value="1"/>
</dbReference>
<dbReference type="NCBIfam" id="NF009905">
    <property type="entry name" value="PRK13368.1"/>
    <property type="match status" value="1"/>
</dbReference>
<dbReference type="PANTHER" id="PTHR42866">
    <property type="entry name" value="3-DEOXY-MANNO-OCTULOSONATE CYTIDYLYLTRANSFERASE"/>
    <property type="match status" value="1"/>
</dbReference>
<dbReference type="PANTHER" id="PTHR42866:SF2">
    <property type="entry name" value="3-DEOXY-MANNO-OCTULOSONATE CYTIDYLYLTRANSFERASE, MITOCHONDRIAL"/>
    <property type="match status" value="1"/>
</dbReference>
<dbReference type="Pfam" id="PF02348">
    <property type="entry name" value="CTP_transf_3"/>
    <property type="match status" value="1"/>
</dbReference>
<dbReference type="SUPFAM" id="SSF53448">
    <property type="entry name" value="Nucleotide-diphospho-sugar transferases"/>
    <property type="match status" value="1"/>
</dbReference>